<evidence type="ECO:0000255" key="1">
    <source>
        <dbReference type="HAMAP-Rule" id="MF_00692"/>
    </source>
</evidence>
<organism>
    <name type="scientific">Salmonella paratyphi B (strain ATCC BAA-1250 / SPB7)</name>
    <dbReference type="NCBI Taxonomy" id="1016998"/>
    <lineage>
        <taxon>Bacteria</taxon>
        <taxon>Pseudomonadati</taxon>
        <taxon>Pseudomonadota</taxon>
        <taxon>Gammaproteobacteria</taxon>
        <taxon>Enterobacterales</taxon>
        <taxon>Enterobacteriaceae</taxon>
        <taxon>Salmonella</taxon>
    </lineage>
</organism>
<dbReference type="EC" id="2.7.7.-" evidence="1"/>
<dbReference type="EC" id="2.7.7.108" evidence="1"/>
<dbReference type="EMBL" id="CP000886">
    <property type="protein sequence ID" value="ABX67378.1"/>
    <property type="molecule type" value="Genomic_DNA"/>
</dbReference>
<dbReference type="RefSeq" id="WP_000175678.1">
    <property type="nucleotide sequence ID" value="NC_010102.1"/>
</dbReference>
<dbReference type="SMR" id="A9N229"/>
<dbReference type="KEGG" id="spq:SPAB_01991"/>
<dbReference type="PATRIC" id="fig|1016998.12.peg.1879"/>
<dbReference type="HOGENOM" id="CLU_010245_4_0_6"/>
<dbReference type="BioCyc" id="SENT1016998:SPAB_RS08120-MONOMER"/>
<dbReference type="Proteomes" id="UP000008556">
    <property type="component" value="Chromosome"/>
</dbReference>
<dbReference type="GO" id="GO:0070733">
    <property type="term" value="F:AMPylase activity"/>
    <property type="evidence" value="ECO:0007669"/>
    <property type="project" value="RHEA"/>
</dbReference>
<dbReference type="GO" id="GO:0005524">
    <property type="term" value="F:ATP binding"/>
    <property type="evidence" value="ECO:0007669"/>
    <property type="project" value="UniProtKB-UniRule"/>
</dbReference>
<dbReference type="GO" id="GO:0000287">
    <property type="term" value="F:magnesium ion binding"/>
    <property type="evidence" value="ECO:0007669"/>
    <property type="project" value="UniProtKB-UniRule"/>
</dbReference>
<dbReference type="HAMAP" id="MF_00692">
    <property type="entry name" value="YdiU_SelO"/>
    <property type="match status" value="1"/>
</dbReference>
<dbReference type="InterPro" id="IPR054838">
    <property type="entry name" value="adnlytase_SelO"/>
</dbReference>
<dbReference type="InterPro" id="IPR003846">
    <property type="entry name" value="SelO"/>
</dbReference>
<dbReference type="NCBIfam" id="NF040880">
    <property type="entry name" value="adnlytase_SelO"/>
    <property type="match status" value="1"/>
</dbReference>
<dbReference type="NCBIfam" id="NF000658">
    <property type="entry name" value="PRK00029.1"/>
    <property type="match status" value="1"/>
</dbReference>
<dbReference type="PANTHER" id="PTHR32057">
    <property type="entry name" value="PROTEIN ADENYLYLTRANSFERASE SELO, MITOCHONDRIAL"/>
    <property type="match status" value="1"/>
</dbReference>
<dbReference type="PANTHER" id="PTHR32057:SF14">
    <property type="entry name" value="PROTEIN ADENYLYLTRANSFERASE SELO, MITOCHONDRIAL"/>
    <property type="match status" value="1"/>
</dbReference>
<dbReference type="Pfam" id="PF02696">
    <property type="entry name" value="SelO"/>
    <property type="match status" value="1"/>
</dbReference>
<proteinExistence type="inferred from homology"/>
<reference key="1">
    <citation type="submission" date="2007-11" db="EMBL/GenBank/DDBJ databases">
        <authorList>
            <consortium name="The Salmonella enterica serovar Paratyphi B Genome Sequencing Project"/>
            <person name="McClelland M."/>
            <person name="Sanderson E.K."/>
            <person name="Porwollik S."/>
            <person name="Spieth J."/>
            <person name="Clifton W.S."/>
            <person name="Fulton R."/>
            <person name="Cordes M."/>
            <person name="Wollam A."/>
            <person name="Shah N."/>
            <person name="Pepin K."/>
            <person name="Bhonagiri V."/>
            <person name="Nash W."/>
            <person name="Johnson M."/>
            <person name="Thiruvilangam P."/>
            <person name="Wilson R."/>
        </authorList>
    </citation>
    <scope>NUCLEOTIDE SEQUENCE [LARGE SCALE GENOMIC DNA]</scope>
    <source>
        <strain>ATCC BAA-1250 / SPB7</strain>
    </source>
</reference>
<sequence length="480" mass="54773">MTLSFTARWRDELPATYTALLPTPLKNARLIWYNDKLAQQLAIPASLFDATNGAGVWGGETLLPGMSPVAQVYSGHQFGVWAGQLGDGRGILLGEQLLADGSTLDWHLKGAGLTPYSRMGDGRAVLRSTIRESLASEAMHYLGIPTTRALSIVASDTPVQRETQETGAMLMRLAQSHMRFGHFEHFYYRREPEKVQQLADFAIRHYWPQWQDVAEKYALWFEEVAARTGRLIAEWQTVGFAHGVMNTDNMSILGLTIDYGPFGFLDDYDPGFIGNHSDHQGRYRFDNQPSVALWNLQRLAQTLTPFIEIDALNRALDRYQDALLTHYGQRMRQKLGFFTEQKDDNALLNELFSLMAREGSDYTRTFRMLSHTEQQSASSPLRDTFIDRAAFDAWFDRYRARLRTEAVDDALRQQQMQRVNPAVVLRNWLAQRAIDAAEQGDMAELHRLHEVLRQPFTDRDDDYASRPPEWGKRLEVSCSS</sequence>
<gene>
    <name evidence="1" type="primary">ydiU</name>
    <name evidence="1" type="synonym">selO</name>
    <name type="ordered locus">SPAB_01991</name>
</gene>
<accession>A9N229</accession>
<feature type="chain" id="PRO_1000083136" description="Protein nucleotidyltransferase YdiU">
    <location>
        <begin position="1"/>
        <end position="480"/>
    </location>
</feature>
<feature type="active site" description="Proton acceptor" evidence="1">
    <location>
        <position position="248"/>
    </location>
</feature>
<feature type="binding site" evidence="1">
    <location>
        <position position="86"/>
    </location>
    <ligand>
        <name>ATP</name>
        <dbReference type="ChEBI" id="CHEBI:30616"/>
    </ligand>
</feature>
<feature type="binding site" evidence="1">
    <location>
        <position position="88"/>
    </location>
    <ligand>
        <name>ATP</name>
        <dbReference type="ChEBI" id="CHEBI:30616"/>
    </ligand>
</feature>
<feature type="binding site" evidence="1">
    <location>
        <position position="89"/>
    </location>
    <ligand>
        <name>ATP</name>
        <dbReference type="ChEBI" id="CHEBI:30616"/>
    </ligand>
</feature>
<feature type="binding site" evidence="1">
    <location>
        <position position="109"/>
    </location>
    <ligand>
        <name>ATP</name>
        <dbReference type="ChEBI" id="CHEBI:30616"/>
    </ligand>
</feature>
<feature type="binding site" evidence="1">
    <location>
        <position position="121"/>
    </location>
    <ligand>
        <name>ATP</name>
        <dbReference type="ChEBI" id="CHEBI:30616"/>
    </ligand>
</feature>
<feature type="binding site" evidence="1">
    <location>
        <position position="122"/>
    </location>
    <ligand>
        <name>ATP</name>
        <dbReference type="ChEBI" id="CHEBI:30616"/>
    </ligand>
</feature>
<feature type="binding site" evidence="1">
    <location>
        <position position="172"/>
    </location>
    <ligand>
        <name>ATP</name>
        <dbReference type="ChEBI" id="CHEBI:30616"/>
    </ligand>
</feature>
<feature type="binding site" evidence="1">
    <location>
        <position position="179"/>
    </location>
    <ligand>
        <name>ATP</name>
        <dbReference type="ChEBI" id="CHEBI:30616"/>
    </ligand>
</feature>
<feature type="binding site" evidence="1">
    <location>
        <position position="249"/>
    </location>
    <ligand>
        <name>Mg(2+)</name>
        <dbReference type="ChEBI" id="CHEBI:18420"/>
    </ligand>
</feature>
<feature type="binding site" evidence="1">
    <location>
        <position position="258"/>
    </location>
    <ligand>
        <name>ATP</name>
        <dbReference type="ChEBI" id="CHEBI:30616"/>
    </ligand>
</feature>
<feature type="binding site" evidence="1">
    <location>
        <position position="258"/>
    </location>
    <ligand>
        <name>Mg(2+)</name>
        <dbReference type="ChEBI" id="CHEBI:18420"/>
    </ligand>
</feature>
<comment type="function">
    <text evidence="1">Nucleotidyltransferase involved in the post-translational modification of proteins. It can catalyze the addition of adenosine monophosphate (AMP) or uridine monophosphate (UMP) to a protein, resulting in modifications known as AMPylation and UMPylation.</text>
</comment>
<comment type="catalytic activity">
    <reaction evidence="1">
        <text>L-seryl-[protein] + ATP = 3-O-(5'-adenylyl)-L-seryl-[protein] + diphosphate</text>
        <dbReference type="Rhea" id="RHEA:58120"/>
        <dbReference type="Rhea" id="RHEA-COMP:9863"/>
        <dbReference type="Rhea" id="RHEA-COMP:15073"/>
        <dbReference type="ChEBI" id="CHEBI:29999"/>
        <dbReference type="ChEBI" id="CHEBI:30616"/>
        <dbReference type="ChEBI" id="CHEBI:33019"/>
        <dbReference type="ChEBI" id="CHEBI:142516"/>
        <dbReference type="EC" id="2.7.7.108"/>
    </reaction>
</comment>
<comment type="catalytic activity">
    <reaction evidence="1">
        <text>L-threonyl-[protein] + ATP = 3-O-(5'-adenylyl)-L-threonyl-[protein] + diphosphate</text>
        <dbReference type="Rhea" id="RHEA:54292"/>
        <dbReference type="Rhea" id="RHEA-COMP:11060"/>
        <dbReference type="Rhea" id="RHEA-COMP:13847"/>
        <dbReference type="ChEBI" id="CHEBI:30013"/>
        <dbReference type="ChEBI" id="CHEBI:30616"/>
        <dbReference type="ChEBI" id="CHEBI:33019"/>
        <dbReference type="ChEBI" id="CHEBI:138113"/>
        <dbReference type="EC" id="2.7.7.108"/>
    </reaction>
</comment>
<comment type="catalytic activity">
    <reaction evidence="1">
        <text>L-tyrosyl-[protein] + ATP = O-(5'-adenylyl)-L-tyrosyl-[protein] + diphosphate</text>
        <dbReference type="Rhea" id="RHEA:54288"/>
        <dbReference type="Rhea" id="RHEA-COMP:10136"/>
        <dbReference type="Rhea" id="RHEA-COMP:13846"/>
        <dbReference type="ChEBI" id="CHEBI:30616"/>
        <dbReference type="ChEBI" id="CHEBI:33019"/>
        <dbReference type="ChEBI" id="CHEBI:46858"/>
        <dbReference type="ChEBI" id="CHEBI:83624"/>
        <dbReference type="EC" id="2.7.7.108"/>
    </reaction>
</comment>
<comment type="catalytic activity">
    <reaction evidence="1">
        <text>L-histidyl-[protein] + UTP = N(tele)-(5'-uridylyl)-L-histidyl-[protein] + diphosphate</text>
        <dbReference type="Rhea" id="RHEA:83891"/>
        <dbReference type="Rhea" id="RHEA-COMP:9745"/>
        <dbReference type="Rhea" id="RHEA-COMP:20239"/>
        <dbReference type="ChEBI" id="CHEBI:29979"/>
        <dbReference type="ChEBI" id="CHEBI:33019"/>
        <dbReference type="ChEBI" id="CHEBI:46398"/>
        <dbReference type="ChEBI" id="CHEBI:233474"/>
    </reaction>
</comment>
<comment type="catalytic activity">
    <reaction evidence="1">
        <text>L-seryl-[protein] + UTP = O-(5'-uridylyl)-L-seryl-[protein] + diphosphate</text>
        <dbReference type="Rhea" id="RHEA:64604"/>
        <dbReference type="Rhea" id="RHEA-COMP:9863"/>
        <dbReference type="Rhea" id="RHEA-COMP:16635"/>
        <dbReference type="ChEBI" id="CHEBI:29999"/>
        <dbReference type="ChEBI" id="CHEBI:33019"/>
        <dbReference type="ChEBI" id="CHEBI:46398"/>
        <dbReference type="ChEBI" id="CHEBI:156051"/>
    </reaction>
</comment>
<comment type="catalytic activity">
    <reaction evidence="1">
        <text>L-tyrosyl-[protein] + UTP = O-(5'-uridylyl)-L-tyrosyl-[protein] + diphosphate</text>
        <dbReference type="Rhea" id="RHEA:83887"/>
        <dbReference type="Rhea" id="RHEA-COMP:10136"/>
        <dbReference type="Rhea" id="RHEA-COMP:20238"/>
        <dbReference type="ChEBI" id="CHEBI:33019"/>
        <dbReference type="ChEBI" id="CHEBI:46398"/>
        <dbReference type="ChEBI" id="CHEBI:46858"/>
        <dbReference type="ChEBI" id="CHEBI:90602"/>
    </reaction>
</comment>
<comment type="cofactor">
    <cofactor evidence="1">
        <name>Mg(2+)</name>
        <dbReference type="ChEBI" id="CHEBI:18420"/>
    </cofactor>
    <cofactor evidence="1">
        <name>Mn(2+)</name>
        <dbReference type="ChEBI" id="CHEBI:29035"/>
    </cofactor>
</comment>
<comment type="similarity">
    <text evidence="1">Belongs to the SELO family.</text>
</comment>
<name>SELO_SALPB</name>
<protein>
    <recommendedName>
        <fullName evidence="1">Protein nucleotidyltransferase YdiU</fullName>
        <ecNumber evidence="1">2.7.7.-</ecNumber>
    </recommendedName>
    <alternativeName>
        <fullName evidence="1">Protein adenylyltransferase YdiU</fullName>
        <ecNumber evidence="1">2.7.7.108</ecNumber>
    </alternativeName>
    <alternativeName>
        <fullName evidence="1">Protein uridylyltransferase YdiU</fullName>
        <ecNumber evidence="1">2.7.7.-</ecNumber>
    </alternativeName>
</protein>
<keyword id="KW-0067">ATP-binding</keyword>
<keyword id="KW-0460">Magnesium</keyword>
<keyword id="KW-0464">Manganese</keyword>
<keyword id="KW-0479">Metal-binding</keyword>
<keyword id="KW-0547">Nucleotide-binding</keyword>
<keyword id="KW-0548">Nucleotidyltransferase</keyword>
<keyword id="KW-0808">Transferase</keyword>